<comment type="function">
    <text evidence="1">One of the primary rRNA binding proteins. Required for association of the 30S and 50S subunits to form the 70S ribosome, for tRNA binding and peptide bond formation. It has been suggested to have peptidyltransferase activity; this is somewhat controversial. Makes several contacts with the 16S rRNA in the 70S ribosome.</text>
</comment>
<comment type="subunit">
    <text evidence="1">Part of the 50S ribosomal subunit. Forms a bridge to the 30S subunit in the 70S ribosome.</text>
</comment>
<comment type="similarity">
    <text evidence="1">Belongs to the universal ribosomal protein uL2 family.</text>
</comment>
<dbReference type="EMBL" id="CP000142">
    <property type="protein sequence ID" value="ABA87963.1"/>
    <property type="molecule type" value="Genomic_DNA"/>
</dbReference>
<dbReference type="RefSeq" id="WP_011340406.1">
    <property type="nucleotide sequence ID" value="NC_007498.2"/>
</dbReference>
<dbReference type="SMR" id="Q3A6P4"/>
<dbReference type="STRING" id="338963.Pcar_0704"/>
<dbReference type="KEGG" id="pca:Pcar_0704"/>
<dbReference type="eggNOG" id="COG0090">
    <property type="taxonomic scope" value="Bacteria"/>
</dbReference>
<dbReference type="HOGENOM" id="CLU_036235_2_1_7"/>
<dbReference type="OrthoDB" id="9778722at2"/>
<dbReference type="Proteomes" id="UP000002534">
    <property type="component" value="Chromosome"/>
</dbReference>
<dbReference type="GO" id="GO:0015934">
    <property type="term" value="C:large ribosomal subunit"/>
    <property type="evidence" value="ECO:0007669"/>
    <property type="project" value="InterPro"/>
</dbReference>
<dbReference type="GO" id="GO:0019843">
    <property type="term" value="F:rRNA binding"/>
    <property type="evidence" value="ECO:0007669"/>
    <property type="project" value="UniProtKB-UniRule"/>
</dbReference>
<dbReference type="GO" id="GO:0003735">
    <property type="term" value="F:structural constituent of ribosome"/>
    <property type="evidence" value="ECO:0007669"/>
    <property type="project" value="InterPro"/>
</dbReference>
<dbReference type="GO" id="GO:0016740">
    <property type="term" value="F:transferase activity"/>
    <property type="evidence" value="ECO:0007669"/>
    <property type="project" value="InterPro"/>
</dbReference>
<dbReference type="GO" id="GO:0002181">
    <property type="term" value="P:cytoplasmic translation"/>
    <property type="evidence" value="ECO:0007669"/>
    <property type="project" value="TreeGrafter"/>
</dbReference>
<dbReference type="FunFam" id="2.30.30.30:FF:000001">
    <property type="entry name" value="50S ribosomal protein L2"/>
    <property type="match status" value="1"/>
</dbReference>
<dbReference type="FunFam" id="2.40.50.140:FF:000003">
    <property type="entry name" value="50S ribosomal protein L2"/>
    <property type="match status" value="1"/>
</dbReference>
<dbReference type="FunFam" id="4.10.950.10:FF:000001">
    <property type="entry name" value="50S ribosomal protein L2"/>
    <property type="match status" value="1"/>
</dbReference>
<dbReference type="Gene3D" id="2.30.30.30">
    <property type="match status" value="1"/>
</dbReference>
<dbReference type="Gene3D" id="2.40.50.140">
    <property type="entry name" value="Nucleic acid-binding proteins"/>
    <property type="match status" value="1"/>
</dbReference>
<dbReference type="Gene3D" id="4.10.950.10">
    <property type="entry name" value="Ribosomal protein L2, domain 3"/>
    <property type="match status" value="1"/>
</dbReference>
<dbReference type="HAMAP" id="MF_01320_B">
    <property type="entry name" value="Ribosomal_uL2_B"/>
    <property type="match status" value="1"/>
</dbReference>
<dbReference type="InterPro" id="IPR012340">
    <property type="entry name" value="NA-bd_OB-fold"/>
</dbReference>
<dbReference type="InterPro" id="IPR014722">
    <property type="entry name" value="Rib_uL2_dom2"/>
</dbReference>
<dbReference type="InterPro" id="IPR002171">
    <property type="entry name" value="Ribosomal_uL2"/>
</dbReference>
<dbReference type="InterPro" id="IPR005880">
    <property type="entry name" value="Ribosomal_uL2_bac/org-type"/>
</dbReference>
<dbReference type="InterPro" id="IPR022669">
    <property type="entry name" value="Ribosomal_uL2_C"/>
</dbReference>
<dbReference type="InterPro" id="IPR022671">
    <property type="entry name" value="Ribosomal_uL2_CS"/>
</dbReference>
<dbReference type="InterPro" id="IPR014726">
    <property type="entry name" value="Ribosomal_uL2_dom3"/>
</dbReference>
<dbReference type="InterPro" id="IPR022666">
    <property type="entry name" value="Ribosomal_uL2_RNA-bd_dom"/>
</dbReference>
<dbReference type="InterPro" id="IPR008991">
    <property type="entry name" value="Translation_prot_SH3-like_sf"/>
</dbReference>
<dbReference type="NCBIfam" id="TIGR01171">
    <property type="entry name" value="rplB_bact"/>
    <property type="match status" value="1"/>
</dbReference>
<dbReference type="PANTHER" id="PTHR13691:SF5">
    <property type="entry name" value="LARGE RIBOSOMAL SUBUNIT PROTEIN UL2M"/>
    <property type="match status" value="1"/>
</dbReference>
<dbReference type="PANTHER" id="PTHR13691">
    <property type="entry name" value="RIBOSOMAL PROTEIN L2"/>
    <property type="match status" value="1"/>
</dbReference>
<dbReference type="Pfam" id="PF00181">
    <property type="entry name" value="Ribosomal_L2"/>
    <property type="match status" value="1"/>
</dbReference>
<dbReference type="Pfam" id="PF03947">
    <property type="entry name" value="Ribosomal_L2_C"/>
    <property type="match status" value="1"/>
</dbReference>
<dbReference type="PIRSF" id="PIRSF002158">
    <property type="entry name" value="Ribosomal_L2"/>
    <property type="match status" value="1"/>
</dbReference>
<dbReference type="SMART" id="SM01383">
    <property type="entry name" value="Ribosomal_L2"/>
    <property type="match status" value="1"/>
</dbReference>
<dbReference type="SMART" id="SM01382">
    <property type="entry name" value="Ribosomal_L2_C"/>
    <property type="match status" value="1"/>
</dbReference>
<dbReference type="SUPFAM" id="SSF50249">
    <property type="entry name" value="Nucleic acid-binding proteins"/>
    <property type="match status" value="1"/>
</dbReference>
<dbReference type="SUPFAM" id="SSF50104">
    <property type="entry name" value="Translation proteins SH3-like domain"/>
    <property type="match status" value="1"/>
</dbReference>
<dbReference type="PROSITE" id="PS00467">
    <property type="entry name" value="RIBOSOMAL_L2"/>
    <property type="match status" value="1"/>
</dbReference>
<proteinExistence type="inferred from homology"/>
<keyword id="KW-1185">Reference proteome</keyword>
<keyword id="KW-0687">Ribonucleoprotein</keyword>
<keyword id="KW-0689">Ribosomal protein</keyword>
<keyword id="KW-0694">RNA-binding</keyword>
<keyword id="KW-0699">rRNA-binding</keyword>
<accession>Q3A6P4</accession>
<organism>
    <name type="scientific">Syntrophotalea carbinolica (strain DSM 2380 / NBRC 103641 / GraBd1)</name>
    <name type="common">Pelobacter carbinolicus</name>
    <dbReference type="NCBI Taxonomy" id="338963"/>
    <lineage>
        <taxon>Bacteria</taxon>
        <taxon>Pseudomonadati</taxon>
        <taxon>Thermodesulfobacteriota</taxon>
        <taxon>Desulfuromonadia</taxon>
        <taxon>Desulfuromonadales</taxon>
        <taxon>Syntrophotaleaceae</taxon>
        <taxon>Syntrophotalea</taxon>
    </lineage>
</organism>
<reference key="1">
    <citation type="submission" date="2005-10" db="EMBL/GenBank/DDBJ databases">
        <title>Complete sequence of Pelobacter carbinolicus DSM 2380.</title>
        <authorList>
            <person name="Copeland A."/>
            <person name="Lucas S."/>
            <person name="Lapidus A."/>
            <person name="Barry K."/>
            <person name="Detter J.C."/>
            <person name="Glavina T."/>
            <person name="Hammon N."/>
            <person name="Israni S."/>
            <person name="Pitluck S."/>
            <person name="Chertkov O."/>
            <person name="Schmutz J."/>
            <person name="Larimer F."/>
            <person name="Land M."/>
            <person name="Kyrpides N."/>
            <person name="Ivanova N."/>
            <person name="Richardson P."/>
        </authorList>
    </citation>
    <scope>NUCLEOTIDE SEQUENCE [LARGE SCALE GENOMIC DNA]</scope>
    <source>
        <strain>DSM 2380 / NBRC 103641 / GraBd1</strain>
    </source>
</reference>
<protein>
    <recommendedName>
        <fullName evidence="1">Large ribosomal subunit protein uL2</fullName>
    </recommendedName>
    <alternativeName>
        <fullName evidence="3">50S ribosomal protein L2</fullName>
    </alternativeName>
</protein>
<feature type="chain" id="PRO_0000237221" description="Large ribosomal subunit protein uL2">
    <location>
        <begin position="1"/>
        <end position="273"/>
    </location>
</feature>
<feature type="region of interest" description="Disordered" evidence="2">
    <location>
        <begin position="213"/>
        <end position="261"/>
    </location>
</feature>
<sequence length="273" mass="29870">MAIKKYKPTSAGRRHMTSADFADITAAKPEKSLVEKLNKSGGRNNAGRITKRHTGGGHKRKYRVIDFRREKKEIPAKIASIEYDPNRSARIALACYADGEKRYILAPLGLKVGDVVIASEQADIKPGNALSIRSIPLGTWVHNIELKIGKGGQLARSAGTYAMIAAKEGKYAQLRLPSGEVRLVLQDCCATVGQVGNVQHENVKIGKAGRNRWLGKRPQSRGVAMNPVDHPHGGGEGKSSGGRHPVTPWGVPTKGYKTRVNKRTDRFIVRRKK</sequence>
<name>RL2_SYNC1</name>
<gene>
    <name evidence="1" type="primary">rplB</name>
    <name type="ordered locus">Pcar_0704</name>
</gene>
<evidence type="ECO:0000255" key="1">
    <source>
        <dbReference type="HAMAP-Rule" id="MF_01320"/>
    </source>
</evidence>
<evidence type="ECO:0000256" key="2">
    <source>
        <dbReference type="SAM" id="MobiDB-lite"/>
    </source>
</evidence>
<evidence type="ECO:0000305" key="3"/>